<sequence length="493" mass="56010">MNRVAVVVLGDIGRSPRMQYHSMSLSKLENTKVTLIGYRESEPHPQIVNNDSITIEPLKPFPISMSNSFKKIPLISIFMWPLLAICKVLFQIIQLMYVLLVKVPSPLNTILVQSPPAIPTIFVMQIVCWIRGVHLVIDWHNLGYTLLKLSLSKSDNHPIIRLAKFIERYFAKNAYAHLFVTNEMKIQLVRDWNLKGKTFVFHDKASPIFKSLTDREQEEFLKTFINKYSIKGEDKVYIESVISKKSIRNPKQQTSIIISSTSWTQDEDFSILLDAIVKYDIEHAINNNNNKVEEAQDESVVLAENLLFIITGKGPQKEYYQEKINSLSLKKSRIITVWLDSEDYPKLLACCDLGVSLHNSSSGIDLPMKVVDMFGCCLPVLAIDFKCIGELVKVNYNGFLFKDSDQLHQLLNQLFTHPTNNNTITNTNNNKNLILEKMRKNLTKDRETDTWESNWLTIKPLFIPSSSSSSSSSSSSSSSSSSSSSSNSKSKKD</sequence>
<name>ALG1_DICDI</name>
<organism>
    <name type="scientific">Dictyostelium discoideum</name>
    <name type="common">Social amoeba</name>
    <dbReference type="NCBI Taxonomy" id="44689"/>
    <lineage>
        <taxon>Eukaryota</taxon>
        <taxon>Amoebozoa</taxon>
        <taxon>Evosea</taxon>
        <taxon>Eumycetozoa</taxon>
        <taxon>Dictyostelia</taxon>
        <taxon>Dictyosteliales</taxon>
        <taxon>Dictyosteliaceae</taxon>
        <taxon>Dictyostelium</taxon>
    </lineage>
</organism>
<reference key="1">
    <citation type="journal article" date="1997" name="Gene">
        <title>The Dictyostelium discoideum beta-1,4-mannosyltransferase gene, mntA, has two periods of developmental expression.</title>
        <authorList>
            <person name="Lee S.-K."/>
            <person name="Li G."/>
            <person name="Yu S.-L."/>
            <person name="Alexander H."/>
            <person name="Alexander S."/>
        </authorList>
    </citation>
    <scope>NUCLEOTIDE SEQUENCE [GENOMIC DNA]</scope>
    <scope>DEVELOPMENTAL STAGE</scope>
    <source>
        <strain>AX4</strain>
    </source>
</reference>
<reference key="2">
    <citation type="journal article" date="2005" name="Nature">
        <title>The genome of the social amoeba Dictyostelium discoideum.</title>
        <authorList>
            <person name="Eichinger L."/>
            <person name="Pachebat J.A."/>
            <person name="Gloeckner G."/>
            <person name="Rajandream M.A."/>
            <person name="Sucgang R."/>
            <person name="Berriman M."/>
            <person name="Song J."/>
            <person name="Olsen R."/>
            <person name="Szafranski K."/>
            <person name="Xu Q."/>
            <person name="Tunggal B."/>
            <person name="Kummerfeld S."/>
            <person name="Madera M."/>
            <person name="Konfortov B.A."/>
            <person name="Rivero F."/>
            <person name="Bankier A.T."/>
            <person name="Lehmann R."/>
            <person name="Hamlin N."/>
            <person name="Davies R."/>
            <person name="Gaudet P."/>
            <person name="Fey P."/>
            <person name="Pilcher K."/>
            <person name="Chen G."/>
            <person name="Saunders D."/>
            <person name="Sodergren E.J."/>
            <person name="Davis P."/>
            <person name="Kerhornou A."/>
            <person name="Nie X."/>
            <person name="Hall N."/>
            <person name="Anjard C."/>
            <person name="Hemphill L."/>
            <person name="Bason N."/>
            <person name="Farbrother P."/>
            <person name="Desany B."/>
            <person name="Just E."/>
            <person name="Morio T."/>
            <person name="Rost R."/>
            <person name="Churcher C.M."/>
            <person name="Cooper J."/>
            <person name="Haydock S."/>
            <person name="van Driessche N."/>
            <person name="Cronin A."/>
            <person name="Goodhead I."/>
            <person name="Muzny D.M."/>
            <person name="Mourier T."/>
            <person name="Pain A."/>
            <person name="Lu M."/>
            <person name="Harper D."/>
            <person name="Lindsay R."/>
            <person name="Hauser H."/>
            <person name="James K.D."/>
            <person name="Quiles M."/>
            <person name="Madan Babu M."/>
            <person name="Saito T."/>
            <person name="Buchrieser C."/>
            <person name="Wardroper A."/>
            <person name="Felder M."/>
            <person name="Thangavelu M."/>
            <person name="Johnson D."/>
            <person name="Knights A."/>
            <person name="Loulseged H."/>
            <person name="Mungall K.L."/>
            <person name="Oliver K."/>
            <person name="Price C."/>
            <person name="Quail M.A."/>
            <person name="Urushihara H."/>
            <person name="Hernandez J."/>
            <person name="Rabbinowitsch E."/>
            <person name="Steffen D."/>
            <person name="Sanders M."/>
            <person name="Ma J."/>
            <person name="Kohara Y."/>
            <person name="Sharp S."/>
            <person name="Simmonds M.N."/>
            <person name="Spiegler S."/>
            <person name="Tivey A."/>
            <person name="Sugano S."/>
            <person name="White B."/>
            <person name="Walker D."/>
            <person name="Woodward J.R."/>
            <person name="Winckler T."/>
            <person name="Tanaka Y."/>
            <person name="Shaulsky G."/>
            <person name="Schleicher M."/>
            <person name="Weinstock G.M."/>
            <person name="Rosenthal A."/>
            <person name="Cox E.C."/>
            <person name="Chisholm R.L."/>
            <person name="Gibbs R.A."/>
            <person name="Loomis W.F."/>
            <person name="Platzer M."/>
            <person name="Kay R.R."/>
            <person name="Williams J.G."/>
            <person name="Dear P.H."/>
            <person name="Noegel A.A."/>
            <person name="Barrell B.G."/>
            <person name="Kuspa A."/>
        </authorList>
    </citation>
    <scope>NUCLEOTIDE SEQUENCE [LARGE SCALE GENOMIC DNA]</scope>
    <source>
        <strain>AX4</strain>
    </source>
</reference>
<accession>P90522</accession>
<accession>Q54MD7</accession>
<keyword id="KW-0256">Endoplasmic reticulum</keyword>
<keyword id="KW-0328">Glycosyltransferase</keyword>
<keyword id="KW-0472">Membrane</keyword>
<keyword id="KW-1185">Reference proteome</keyword>
<keyword id="KW-0735">Signal-anchor</keyword>
<keyword id="KW-0808">Transferase</keyword>
<keyword id="KW-0812">Transmembrane</keyword>
<keyword id="KW-1133">Transmembrane helix</keyword>
<evidence type="ECO:0000250" key="1">
    <source>
        <dbReference type="UniProtKB" id="P16661"/>
    </source>
</evidence>
<evidence type="ECO:0000255" key="2"/>
<evidence type="ECO:0000256" key="3">
    <source>
        <dbReference type="SAM" id="MobiDB-lite"/>
    </source>
</evidence>
<evidence type="ECO:0000269" key="4">
    <source>
    </source>
</evidence>
<evidence type="ECO:0000305" key="5"/>
<proteinExistence type="evidence at transcript level"/>
<dbReference type="EC" id="2.4.1.142" evidence="1"/>
<dbReference type="EMBL" id="U65018">
    <property type="protein sequence ID" value="AAC47828.1"/>
    <property type="molecule type" value="Genomic_DNA"/>
</dbReference>
<dbReference type="EMBL" id="AAFI02000085">
    <property type="protein sequence ID" value="EAL64384.1"/>
    <property type="molecule type" value="Genomic_DNA"/>
</dbReference>
<dbReference type="RefSeq" id="XP_637897.1">
    <property type="nucleotide sequence ID" value="XM_632805.1"/>
</dbReference>
<dbReference type="FunCoup" id="P90522">
    <property type="interactions" value="1062"/>
</dbReference>
<dbReference type="STRING" id="44689.P90522"/>
<dbReference type="CAZy" id="GT33">
    <property type="family name" value="Glycosyltransferase Family 33"/>
</dbReference>
<dbReference type="GlyCosmos" id="P90522">
    <property type="glycosylation" value="3 sites, No reported glycans"/>
</dbReference>
<dbReference type="PaxDb" id="44689-DDB0191150"/>
<dbReference type="EnsemblProtists" id="EAL64384">
    <property type="protein sequence ID" value="EAL64384"/>
    <property type="gene ID" value="DDB_G0286011"/>
</dbReference>
<dbReference type="GeneID" id="8625407"/>
<dbReference type="KEGG" id="ddi:DDB_G0286011"/>
<dbReference type="dictyBase" id="DDB_G0286011">
    <property type="gene designation" value="alg1"/>
</dbReference>
<dbReference type="VEuPathDB" id="AmoebaDB:DDB_G0286011"/>
<dbReference type="eggNOG" id="KOG2941">
    <property type="taxonomic scope" value="Eukaryota"/>
</dbReference>
<dbReference type="HOGENOM" id="CLU_012079_0_0_1"/>
<dbReference type="InParanoid" id="P90522"/>
<dbReference type="OMA" id="CKLIIDW"/>
<dbReference type="PhylomeDB" id="P90522"/>
<dbReference type="Reactome" id="R-DDI-446193">
    <property type="pathway name" value="Biosynthesis of the N-glycan precursor (dolichol lipid-linked oligosaccharide, LLO) and transfer to a nascent protein"/>
</dbReference>
<dbReference type="UniPathway" id="UPA00378"/>
<dbReference type="PRO" id="PR:P90522"/>
<dbReference type="Proteomes" id="UP000002195">
    <property type="component" value="Chromosome 4"/>
</dbReference>
<dbReference type="GO" id="GO:0098554">
    <property type="term" value="C:cytoplasmic side of endoplasmic reticulum membrane"/>
    <property type="evidence" value="ECO:0000250"/>
    <property type="project" value="UniProtKB"/>
</dbReference>
<dbReference type="GO" id="GO:0005783">
    <property type="term" value="C:endoplasmic reticulum"/>
    <property type="evidence" value="ECO:0000318"/>
    <property type="project" value="GO_Central"/>
</dbReference>
<dbReference type="GO" id="GO:0005811">
    <property type="term" value="C:lipid droplet"/>
    <property type="evidence" value="ECO:0007005"/>
    <property type="project" value="dictyBase"/>
</dbReference>
<dbReference type="GO" id="GO:0004578">
    <property type="term" value="F:chitobiosyldiphosphodolichol beta-mannosyltransferase activity"/>
    <property type="evidence" value="ECO:0000250"/>
    <property type="project" value="UniProtKB"/>
</dbReference>
<dbReference type="GO" id="GO:0000030">
    <property type="term" value="F:mannosyltransferase activity"/>
    <property type="evidence" value="ECO:0000318"/>
    <property type="project" value="GO_Central"/>
</dbReference>
<dbReference type="GO" id="GO:0006488">
    <property type="term" value="P:dolichol-linked oligosaccharide biosynthetic process"/>
    <property type="evidence" value="ECO:0000250"/>
    <property type="project" value="UniProtKB"/>
</dbReference>
<dbReference type="GO" id="GO:0006486">
    <property type="term" value="P:protein glycosylation"/>
    <property type="evidence" value="ECO:0000318"/>
    <property type="project" value="GO_Central"/>
</dbReference>
<dbReference type="FunFam" id="3.40.50.2000:FF:000745">
    <property type="entry name" value="Chitobiosyldiphosphodolichol beta-mannosyltransferase"/>
    <property type="match status" value="1"/>
</dbReference>
<dbReference type="Gene3D" id="3.40.50.2000">
    <property type="entry name" value="Glycogen Phosphorylase B"/>
    <property type="match status" value="1"/>
</dbReference>
<dbReference type="InterPro" id="IPR026051">
    <property type="entry name" value="ALG1-like"/>
</dbReference>
<dbReference type="InterPro" id="IPR001296">
    <property type="entry name" value="Glyco_trans_1"/>
</dbReference>
<dbReference type="PANTHER" id="PTHR13036">
    <property type="entry name" value="BETA1,4 MANNOSYLTRANSFERASE"/>
    <property type="match status" value="1"/>
</dbReference>
<dbReference type="PANTHER" id="PTHR13036:SF0">
    <property type="entry name" value="CHITOBIOSYLDIPHOSPHODOLICHOL BETA-MANNOSYLTRANSFERASE"/>
    <property type="match status" value="1"/>
</dbReference>
<dbReference type="Pfam" id="PF00534">
    <property type="entry name" value="Glycos_transf_1"/>
    <property type="match status" value="1"/>
</dbReference>
<dbReference type="SUPFAM" id="SSF53756">
    <property type="entry name" value="UDP-Glycosyltransferase/glycogen phosphorylase"/>
    <property type="match status" value="1"/>
</dbReference>
<protein>
    <recommendedName>
        <fullName evidence="1">Chitobiosyldiphosphodolichol beta-mannosyltransferase</fullName>
        <ecNumber evidence="1">2.4.1.142</ecNumber>
    </recommendedName>
    <alternativeName>
        <fullName>Asparagine-linked glycosylation protein 1 homolog</fullName>
    </alternativeName>
    <alternativeName>
        <fullName>Beta-1,4-mannosyltransferase</fullName>
    </alternativeName>
    <alternativeName>
        <fullName>GDP-Man:GlcNAc2-PP-dolichol mannosyltransferase</fullName>
    </alternativeName>
    <alternativeName>
        <fullName>GDP-mannose-dolichol diphosphochitobiose mannosyltransferase</fullName>
    </alternativeName>
</protein>
<comment type="function">
    <text evidence="1">Participates in the formation of the lipid-linked precursor oligosaccharide for N-glycosylation. Involved in assembling the dolichol-pyrophosphate-GlcNAc(2)-Man(5) intermediate on the cytoplasmic surface of the ER.</text>
</comment>
<comment type="catalytic activity">
    <reaction evidence="1">
        <text>an N,N'-diacetylchitobiosyl-diphospho-di-trans,poly-cis-dolichol + GDP-alpha-D-mannose = a beta-D-Man-(1-&gt;4)-beta-D-GlcNAc-(1-&gt;4)-alpha-D-GlcNAc-diphospho-di-trans,poly-cis-dolichol + GDP + H(+)</text>
        <dbReference type="Rhea" id="RHEA:13865"/>
        <dbReference type="Rhea" id="RHEA-COMP:19510"/>
        <dbReference type="Rhea" id="RHEA-COMP:19511"/>
        <dbReference type="ChEBI" id="CHEBI:15378"/>
        <dbReference type="ChEBI" id="CHEBI:57269"/>
        <dbReference type="ChEBI" id="CHEBI:57527"/>
        <dbReference type="ChEBI" id="CHEBI:58189"/>
        <dbReference type="ChEBI" id="CHEBI:58472"/>
        <dbReference type="EC" id="2.4.1.142"/>
    </reaction>
    <physiologicalReaction direction="left-to-right" evidence="1">
        <dbReference type="Rhea" id="RHEA:13866"/>
    </physiologicalReaction>
</comment>
<comment type="pathway">
    <text evidence="1">Protein modification; protein glycosylation.</text>
</comment>
<comment type="subcellular location">
    <subcellularLocation>
        <location evidence="1">Endoplasmic reticulum membrane</location>
        <topology evidence="1">Single-pass membrane protein</topology>
    </subcellularLocation>
</comment>
<comment type="developmental stage">
    <text evidence="4">In bacterially grown celles expressed at 2 hours and 12 hours of development. In axenically grown cells expressed at 2 hours and 8/9 hours of development.</text>
</comment>
<comment type="similarity">
    <text evidence="5">Belongs to the glycosyltransferase group 1 family. Glycosyltransferase 33 subfamily.</text>
</comment>
<feature type="chain" id="PRO_0000326038" description="Chitobiosyldiphosphodolichol beta-mannosyltransferase">
    <location>
        <begin position="1"/>
        <end position="493"/>
    </location>
</feature>
<feature type="topological domain" description="Lumenal" evidence="1">
    <location>
        <begin position="1"/>
        <end position="71"/>
    </location>
</feature>
<feature type="transmembrane region" description="Helical" evidence="2">
    <location>
        <begin position="72"/>
        <end position="92"/>
    </location>
</feature>
<feature type="topological domain" description="Cytoplasmic" evidence="1">
    <location>
        <begin position="93"/>
        <end position="109"/>
    </location>
</feature>
<feature type="intramembrane region" description="Helical" evidence="2">
    <location>
        <begin position="110"/>
        <end position="130"/>
    </location>
</feature>
<feature type="topological domain" description="Cytoplasmic" evidence="1">
    <location>
        <begin position="131"/>
        <end position="493"/>
    </location>
</feature>
<feature type="region of interest" description="Disordered" evidence="3">
    <location>
        <begin position="462"/>
        <end position="493"/>
    </location>
</feature>
<feature type="compositionally biased region" description="Low complexity" evidence="3">
    <location>
        <begin position="465"/>
        <end position="493"/>
    </location>
</feature>
<gene>
    <name type="primary">alg1</name>
    <name type="synonym">mntA</name>
    <name type="ORF">DDB_G0286011</name>
</gene>